<protein>
    <recommendedName>
        <fullName evidence="2">Translation initiation factor IF-2</fullName>
    </recommendedName>
</protein>
<sequence length="1054" mass="113440">MTDKVRIYDIAREMGRDSRDVLEVCEQLGIPFKTHSSTISPEQAELVRSKLGAPHIVKPPRPRPKPPSESLPPEPPAEAKVGERPQQKVPGTASAIVGIRRPAPAQQPAPVGEAKTAETLPAAKPSLSRPERVSPEKGSAGGAQLIGPPRRQVTPLVRSSEATQKPETVSQPATPPTPSESAAAKASGSEPSPVAKRPIVLSPPQRATSGTKPPAERPEPPQKAPEPSRPSPSEAPSPSHARVPQPAEEKAPSPPPAQRPRPQLVSAPVRPGTRSPATKEDSVSSGKAGEAPRPQRRMELVGPPTRPVAKPAPPEPDAASPLPERIPGERPSPVLVEAPVRPTPPKVKRKTEEEEDDELQALSRRAARVQAKRKRSRRRGEGDGDGLDLDPMTIISAVKQAELNALKPLARPTAKPPSYRPPAATAAPPARPRPAARLQQQPTSAEAGAADRASGTEPLPEEKVLLLDGSLTVQELAHRLRVAETEIIKTLFFKGVMVTINQVLDESLAESVAKELGYEIRRPKAEPEAKKTEMLDVEDIDHLVSRPPVVTIMGHVDHGKTTLLDAIRDTKVAQGEAGGITQRIGAYHVDVNFEGQKRRIVFLDTPGHQAFTAMRARGARVTDIAVLVVAADDGVQPQTLEAISHARAAQVPIIVAINKIDKPGSQPERIKQQLAEHGLLPEEWGGDTPMVEVSALTRRNLDALLEMILLVADVAELQANPNRPARGTVIEAHLDKARGPVATLLVQNGTLRVGDTLVAGAVLGRVKAMMDDRGQRLQEAGPSSAVQLLGLDEVPAAGDEFQVYTDEKEARRIAQERAEVLRQTRLQQALLSRRVSLGSVSAKAQEGQLKELNLIIKTDVQGSAEAIQTALRDLPQEEVQLRVLLAAPGEITETDVDLAAASDAIILGFNTTLAPGARQAADDKGVDVREYDIIYNLLDDLRAAMEGLLEPEEVEEPLGQAEVRLVIPIGRGAVAGSYVLSGKVQRNALVRVRRRGEVVYEGRLDSLKRFKDDVREVAAGFECGIGIDKFQSWQEGDIIEVYQMVTKRRTLASV</sequence>
<proteinExistence type="inferred from homology"/>
<evidence type="ECO:0000250" key="1"/>
<evidence type="ECO:0000255" key="2">
    <source>
        <dbReference type="HAMAP-Rule" id="MF_00100"/>
    </source>
</evidence>
<evidence type="ECO:0000256" key="3">
    <source>
        <dbReference type="SAM" id="MobiDB-lite"/>
    </source>
</evidence>
<reference key="1">
    <citation type="journal article" date="2007" name="ISME J.">
        <title>Population level functional diversity in a microbial community revealed by comparative genomic and metagenomic analyses.</title>
        <authorList>
            <person name="Bhaya D."/>
            <person name="Grossman A.R."/>
            <person name="Steunou A.-S."/>
            <person name="Khuri N."/>
            <person name="Cohan F.M."/>
            <person name="Hamamura N."/>
            <person name="Melendrez M.C."/>
            <person name="Bateson M.M."/>
            <person name="Ward D.M."/>
            <person name="Heidelberg J.F."/>
        </authorList>
    </citation>
    <scope>NUCLEOTIDE SEQUENCE [LARGE SCALE GENOMIC DNA]</scope>
    <source>
        <strain>JA-2-3B'a(2-13)</strain>
    </source>
</reference>
<name>IF2_SYNJB</name>
<organism>
    <name type="scientific">Synechococcus sp. (strain JA-2-3B'a(2-13))</name>
    <name type="common">Cyanobacteria bacterium Yellowstone B-Prime</name>
    <dbReference type="NCBI Taxonomy" id="321332"/>
    <lineage>
        <taxon>Bacteria</taxon>
        <taxon>Bacillati</taxon>
        <taxon>Cyanobacteriota</taxon>
        <taxon>Cyanophyceae</taxon>
        <taxon>Synechococcales</taxon>
        <taxon>Synechococcaceae</taxon>
        <taxon>Synechococcus</taxon>
    </lineage>
</organism>
<dbReference type="EMBL" id="CP000240">
    <property type="protein sequence ID" value="ABD02104.1"/>
    <property type="molecule type" value="Genomic_DNA"/>
</dbReference>
<dbReference type="RefSeq" id="WP_011432757.1">
    <property type="nucleotide sequence ID" value="NC_007776.1"/>
</dbReference>
<dbReference type="SMR" id="Q2JMD7"/>
<dbReference type="STRING" id="321332.CYB_1127"/>
<dbReference type="KEGG" id="cyb:CYB_1127"/>
<dbReference type="eggNOG" id="COG0532">
    <property type="taxonomic scope" value="Bacteria"/>
</dbReference>
<dbReference type="HOGENOM" id="CLU_006301_7_0_3"/>
<dbReference type="OrthoDB" id="9811804at2"/>
<dbReference type="Proteomes" id="UP000001938">
    <property type="component" value="Chromosome"/>
</dbReference>
<dbReference type="GO" id="GO:0005829">
    <property type="term" value="C:cytosol"/>
    <property type="evidence" value="ECO:0007669"/>
    <property type="project" value="TreeGrafter"/>
</dbReference>
<dbReference type="GO" id="GO:0005525">
    <property type="term" value="F:GTP binding"/>
    <property type="evidence" value="ECO:0007669"/>
    <property type="project" value="UniProtKB-KW"/>
</dbReference>
<dbReference type="GO" id="GO:0003924">
    <property type="term" value="F:GTPase activity"/>
    <property type="evidence" value="ECO:0007669"/>
    <property type="project" value="UniProtKB-UniRule"/>
</dbReference>
<dbReference type="GO" id="GO:0003743">
    <property type="term" value="F:translation initiation factor activity"/>
    <property type="evidence" value="ECO:0007669"/>
    <property type="project" value="UniProtKB-UniRule"/>
</dbReference>
<dbReference type="CDD" id="cd01887">
    <property type="entry name" value="IF2_eIF5B"/>
    <property type="match status" value="1"/>
</dbReference>
<dbReference type="CDD" id="cd03702">
    <property type="entry name" value="IF2_mtIF2_II"/>
    <property type="match status" value="1"/>
</dbReference>
<dbReference type="CDD" id="cd03692">
    <property type="entry name" value="mtIF2_IVc"/>
    <property type="match status" value="1"/>
</dbReference>
<dbReference type="FunFam" id="2.40.30.10:FF:000008">
    <property type="entry name" value="Translation initiation factor IF-2"/>
    <property type="match status" value="1"/>
</dbReference>
<dbReference type="FunFam" id="2.40.30.10:FF:000054">
    <property type="entry name" value="Translation initiation factor IF-2"/>
    <property type="match status" value="1"/>
</dbReference>
<dbReference type="FunFam" id="3.40.50.10050:FF:000001">
    <property type="entry name" value="Translation initiation factor IF-2"/>
    <property type="match status" value="1"/>
</dbReference>
<dbReference type="FunFam" id="3.40.50.300:FF:000019">
    <property type="entry name" value="Translation initiation factor IF-2"/>
    <property type="match status" value="1"/>
</dbReference>
<dbReference type="Gene3D" id="1.10.10.2480">
    <property type="match status" value="1"/>
</dbReference>
<dbReference type="Gene3D" id="3.40.50.300">
    <property type="entry name" value="P-loop containing nucleotide triphosphate hydrolases"/>
    <property type="match status" value="1"/>
</dbReference>
<dbReference type="Gene3D" id="2.40.30.10">
    <property type="entry name" value="Translation factors"/>
    <property type="match status" value="2"/>
</dbReference>
<dbReference type="Gene3D" id="3.40.50.10050">
    <property type="entry name" value="Translation initiation factor IF- 2, domain 3"/>
    <property type="match status" value="1"/>
</dbReference>
<dbReference type="HAMAP" id="MF_00100_B">
    <property type="entry name" value="IF_2_B"/>
    <property type="match status" value="1"/>
</dbReference>
<dbReference type="InterPro" id="IPR053905">
    <property type="entry name" value="EF-G-like_DII"/>
</dbReference>
<dbReference type="InterPro" id="IPR044145">
    <property type="entry name" value="IF2_II"/>
</dbReference>
<dbReference type="InterPro" id="IPR006847">
    <property type="entry name" value="IF2_N"/>
</dbReference>
<dbReference type="InterPro" id="IPR027417">
    <property type="entry name" value="P-loop_NTPase"/>
</dbReference>
<dbReference type="InterPro" id="IPR005225">
    <property type="entry name" value="Small_GTP-bd"/>
</dbReference>
<dbReference type="InterPro" id="IPR000795">
    <property type="entry name" value="T_Tr_GTP-bd_dom"/>
</dbReference>
<dbReference type="InterPro" id="IPR000178">
    <property type="entry name" value="TF_IF2_bacterial-like"/>
</dbReference>
<dbReference type="InterPro" id="IPR015760">
    <property type="entry name" value="TIF_IF2"/>
</dbReference>
<dbReference type="InterPro" id="IPR023115">
    <property type="entry name" value="TIF_IF2_dom3"/>
</dbReference>
<dbReference type="InterPro" id="IPR036925">
    <property type="entry name" value="TIF_IF2_dom3_sf"/>
</dbReference>
<dbReference type="InterPro" id="IPR009000">
    <property type="entry name" value="Transl_B-barrel_sf"/>
</dbReference>
<dbReference type="NCBIfam" id="TIGR00487">
    <property type="entry name" value="IF-2"/>
    <property type="match status" value="1"/>
</dbReference>
<dbReference type="NCBIfam" id="TIGR00231">
    <property type="entry name" value="small_GTP"/>
    <property type="match status" value="1"/>
</dbReference>
<dbReference type="PANTHER" id="PTHR43381:SF5">
    <property type="entry name" value="TR-TYPE G DOMAIN-CONTAINING PROTEIN"/>
    <property type="match status" value="1"/>
</dbReference>
<dbReference type="PANTHER" id="PTHR43381">
    <property type="entry name" value="TRANSLATION INITIATION FACTOR IF-2-RELATED"/>
    <property type="match status" value="1"/>
</dbReference>
<dbReference type="Pfam" id="PF22042">
    <property type="entry name" value="EF-G_D2"/>
    <property type="match status" value="1"/>
</dbReference>
<dbReference type="Pfam" id="PF00009">
    <property type="entry name" value="GTP_EFTU"/>
    <property type="match status" value="1"/>
</dbReference>
<dbReference type="Pfam" id="PF11987">
    <property type="entry name" value="IF-2"/>
    <property type="match status" value="1"/>
</dbReference>
<dbReference type="Pfam" id="PF04760">
    <property type="entry name" value="IF2_N"/>
    <property type="match status" value="2"/>
</dbReference>
<dbReference type="PRINTS" id="PR00315">
    <property type="entry name" value="ELONGATNFCT"/>
</dbReference>
<dbReference type="SUPFAM" id="SSF52156">
    <property type="entry name" value="Initiation factor IF2/eIF5b, domain 3"/>
    <property type="match status" value="1"/>
</dbReference>
<dbReference type="SUPFAM" id="SSF52540">
    <property type="entry name" value="P-loop containing nucleoside triphosphate hydrolases"/>
    <property type="match status" value="1"/>
</dbReference>
<dbReference type="SUPFAM" id="SSF50447">
    <property type="entry name" value="Translation proteins"/>
    <property type="match status" value="2"/>
</dbReference>
<dbReference type="PROSITE" id="PS51722">
    <property type="entry name" value="G_TR_2"/>
    <property type="match status" value="1"/>
</dbReference>
<dbReference type="PROSITE" id="PS01176">
    <property type="entry name" value="IF2"/>
    <property type="match status" value="1"/>
</dbReference>
<keyword id="KW-0963">Cytoplasm</keyword>
<keyword id="KW-0342">GTP-binding</keyword>
<keyword id="KW-0396">Initiation factor</keyword>
<keyword id="KW-0547">Nucleotide-binding</keyword>
<keyword id="KW-0648">Protein biosynthesis</keyword>
<keyword id="KW-1185">Reference proteome</keyword>
<feature type="chain" id="PRO_0000335514" description="Translation initiation factor IF-2">
    <location>
        <begin position="1"/>
        <end position="1054"/>
    </location>
</feature>
<feature type="domain" description="tr-type G">
    <location>
        <begin position="545"/>
        <end position="718"/>
    </location>
</feature>
<feature type="region of interest" description="Disordered" evidence="3">
    <location>
        <begin position="48"/>
        <end position="390"/>
    </location>
</feature>
<feature type="region of interest" description="Disordered" evidence="3">
    <location>
        <begin position="409"/>
        <end position="458"/>
    </location>
</feature>
<feature type="region of interest" description="G1" evidence="1">
    <location>
        <begin position="554"/>
        <end position="561"/>
    </location>
</feature>
<feature type="region of interest" description="G2" evidence="1">
    <location>
        <begin position="579"/>
        <end position="583"/>
    </location>
</feature>
<feature type="region of interest" description="G3" evidence="1">
    <location>
        <begin position="604"/>
        <end position="607"/>
    </location>
</feature>
<feature type="region of interest" description="G4" evidence="1">
    <location>
        <begin position="658"/>
        <end position="661"/>
    </location>
</feature>
<feature type="region of interest" description="G5" evidence="1">
    <location>
        <begin position="694"/>
        <end position="696"/>
    </location>
</feature>
<feature type="compositionally biased region" description="Pro residues" evidence="3">
    <location>
        <begin position="65"/>
        <end position="76"/>
    </location>
</feature>
<feature type="compositionally biased region" description="Polar residues" evidence="3">
    <location>
        <begin position="160"/>
        <end position="169"/>
    </location>
</feature>
<feature type="compositionally biased region" description="Low complexity" evidence="3">
    <location>
        <begin position="179"/>
        <end position="193"/>
    </location>
</feature>
<feature type="compositionally biased region" description="Pro residues" evidence="3">
    <location>
        <begin position="221"/>
        <end position="235"/>
    </location>
</feature>
<feature type="compositionally biased region" description="Pro residues" evidence="3">
    <location>
        <begin position="304"/>
        <end position="316"/>
    </location>
</feature>
<feature type="compositionally biased region" description="Basic residues" evidence="3">
    <location>
        <begin position="365"/>
        <end position="378"/>
    </location>
</feature>
<feature type="compositionally biased region" description="Low complexity" evidence="3">
    <location>
        <begin position="421"/>
        <end position="437"/>
    </location>
</feature>
<feature type="binding site" evidence="2">
    <location>
        <begin position="554"/>
        <end position="561"/>
    </location>
    <ligand>
        <name>GTP</name>
        <dbReference type="ChEBI" id="CHEBI:37565"/>
    </ligand>
</feature>
<feature type="binding site" evidence="2">
    <location>
        <begin position="604"/>
        <end position="608"/>
    </location>
    <ligand>
        <name>GTP</name>
        <dbReference type="ChEBI" id="CHEBI:37565"/>
    </ligand>
</feature>
<feature type="binding site" evidence="2">
    <location>
        <begin position="658"/>
        <end position="661"/>
    </location>
    <ligand>
        <name>GTP</name>
        <dbReference type="ChEBI" id="CHEBI:37565"/>
    </ligand>
</feature>
<accession>Q2JMD7</accession>
<gene>
    <name evidence="2" type="primary">infB</name>
    <name type="ordered locus">CYB_1127</name>
</gene>
<comment type="function">
    <text evidence="2">One of the essential components for the initiation of protein synthesis. Protects formylmethionyl-tRNA from spontaneous hydrolysis and promotes its binding to the 30S ribosomal subunits. Also involved in the hydrolysis of GTP during the formation of the 70S ribosomal complex.</text>
</comment>
<comment type="subcellular location">
    <subcellularLocation>
        <location evidence="2">Cytoplasm</location>
    </subcellularLocation>
</comment>
<comment type="similarity">
    <text evidence="2">Belongs to the TRAFAC class translation factor GTPase superfamily. Classic translation factor GTPase family. IF-2 subfamily.</text>
</comment>